<sequence length="195" mass="22286">MIRMTETENDDRNIILIGYRGTGKTSVGQELARRLHRPFHDTDVLIEKREGRSIRDMVAREGWAFFRERERAAISSLDGLRRCVLATGGGAVLDPKNAEVLKSLGWVVLLTASEEIIVRRILNDPASREQRPSFSGKASTEISEETMRKETTEILKQRMPIYRVLADQIIDTSQISTAEIVDEILRRFQSQRFNV</sequence>
<name>AROK_SYNAS</name>
<organism>
    <name type="scientific">Syntrophus aciditrophicus (strain SB)</name>
    <dbReference type="NCBI Taxonomy" id="56780"/>
    <lineage>
        <taxon>Bacteria</taxon>
        <taxon>Pseudomonadati</taxon>
        <taxon>Thermodesulfobacteriota</taxon>
        <taxon>Syntrophia</taxon>
        <taxon>Syntrophales</taxon>
        <taxon>Syntrophaceae</taxon>
        <taxon>Syntrophus</taxon>
    </lineage>
</organism>
<feature type="chain" id="PRO_0000237949" description="Shikimate kinase">
    <location>
        <begin position="1"/>
        <end position="195"/>
    </location>
</feature>
<feature type="region of interest" description="Disordered" evidence="2">
    <location>
        <begin position="128"/>
        <end position="148"/>
    </location>
</feature>
<feature type="compositionally biased region" description="Polar residues" evidence="2">
    <location>
        <begin position="132"/>
        <end position="141"/>
    </location>
</feature>
<feature type="binding site" evidence="1">
    <location>
        <begin position="21"/>
        <end position="26"/>
    </location>
    <ligand>
        <name>ATP</name>
        <dbReference type="ChEBI" id="CHEBI:30616"/>
    </ligand>
</feature>
<feature type="binding site" evidence="1">
    <location>
        <position position="25"/>
    </location>
    <ligand>
        <name>Mg(2+)</name>
        <dbReference type="ChEBI" id="CHEBI:18420"/>
    </ligand>
</feature>
<feature type="binding site" evidence="1">
    <location>
        <position position="43"/>
    </location>
    <ligand>
        <name>substrate</name>
    </ligand>
</feature>
<feature type="binding site" evidence="1">
    <location>
        <position position="67"/>
    </location>
    <ligand>
        <name>substrate</name>
    </ligand>
</feature>
<feature type="binding site" evidence="1">
    <location>
        <position position="89"/>
    </location>
    <ligand>
        <name>substrate</name>
    </ligand>
</feature>
<feature type="binding site" evidence="1">
    <location>
        <position position="131"/>
    </location>
    <ligand>
        <name>ATP</name>
        <dbReference type="ChEBI" id="CHEBI:30616"/>
    </ligand>
</feature>
<feature type="binding site" evidence="1">
    <location>
        <position position="158"/>
    </location>
    <ligand>
        <name>substrate</name>
    </ligand>
</feature>
<reference key="1">
    <citation type="journal article" date="2007" name="Proc. Natl. Acad. Sci. U.S.A.">
        <title>The genome of Syntrophus aciditrophicus: life at the thermodynamic limit of microbial growth.</title>
        <authorList>
            <person name="McInerney M.J."/>
            <person name="Rohlin L."/>
            <person name="Mouttaki H."/>
            <person name="Kim U."/>
            <person name="Krupp R.S."/>
            <person name="Rios-Hernandez L."/>
            <person name="Sieber J."/>
            <person name="Struchtemeyer C.G."/>
            <person name="Bhattacharyya A."/>
            <person name="Campbell J.W."/>
            <person name="Gunsalus R.P."/>
        </authorList>
    </citation>
    <scope>NUCLEOTIDE SEQUENCE [LARGE SCALE GENOMIC DNA]</scope>
    <source>
        <strain>SB</strain>
    </source>
</reference>
<protein>
    <recommendedName>
        <fullName evidence="1">Shikimate kinase</fullName>
        <shortName evidence="1">SK</shortName>
        <ecNumber evidence="1">2.7.1.71</ecNumber>
    </recommendedName>
</protein>
<proteinExistence type="inferred from homology"/>
<comment type="function">
    <text evidence="1">Catalyzes the specific phosphorylation of the 3-hydroxyl group of shikimic acid using ATP as a cosubstrate.</text>
</comment>
<comment type="catalytic activity">
    <reaction evidence="1">
        <text>shikimate + ATP = 3-phosphoshikimate + ADP + H(+)</text>
        <dbReference type="Rhea" id="RHEA:13121"/>
        <dbReference type="ChEBI" id="CHEBI:15378"/>
        <dbReference type="ChEBI" id="CHEBI:30616"/>
        <dbReference type="ChEBI" id="CHEBI:36208"/>
        <dbReference type="ChEBI" id="CHEBI:145989"/>
        <dbReference type="ChEBI" id="CHEBI:456216"/>
        <dbReference type="EC" id="2.7.1.71"/>
    </reaction>
</comment>
<comment type="cofactor">
    <cofactor evidence="1">
        <name>Mg(2+)</name>
        <dbReference type="ChEBI" id="CHEBI:18420"/>
    </cofactor>
    <text evidence="1">Binds 1 Mg(2+) ion per subunit.</text>
</comment>
<comment type="pathway">
    <text evidence="1">Metabolic intermediate biosynthesis; chorismate biosynthesis; chorismate from D-erythrose 4-phosphate and phosphoenolpyruvate: step 5/7.</text>
</comment>
<comment type="subunit">
    <text evidence="1">Monomer.</text>
</comment>
<comment type="subcellular location">
    <subcellularLocation>
        <location evidence="1">Cytoplasm</location>
    </subcellularLocation>
</comment>
<comment type="similarity">
    <text evidence="1">Belongs to the shikimate kinase family.</text>
</comment>
<accession>Q2LUD6</accession>
<evidence type="ECO:0000255" key="1">
    <source>
        <dbReference type="HAMAP-Rule" id="MF_00109"/>
    </source>
</evidence>
<evidence type="ECO:0000256" key="2">
    <source>
        <dbReference type="SAM" id="MobiDB-lite"/>
    </source>
</evidence>
<keyword id="KW-0028">Amino-acid biosynthesis</keyword>
<keyword id="KW-0057">Aromatic amino acid biosynthesis</keyword>
<keyword id="KW-0067">ATP-binding</keyword>
<keyword id="KW-0963">Cytoplasm</keyword>
<keyword id="KW-0418">Kinase</keyword>
<keyword id="KW-0460">Magnesium</keyword>
<keyword id="KW-0479">Metal-binding</keyword>
<keyword id="KW-0547">Nucleotide-binding</keyword>
<keyword id="KW-1185">Reference proteome</keyword>
<keyword id="KW-0808">Transferase</keyword>
<dbReference type="EC" id="2.7.1.71" evidence="1"/>
<dbReference type="EMBL" id="CP000252">
    <property type="protein sequence ID" value="ABC77692.1"/>
    <property type="molecule type" value="Genomic_DNA"/>
</dbReference>
<dbReference type="RefSeq" id="WP_011417714.1">
    <property type="nucleotide sequence ID" value="NC_007759.1"/>
</dbReference>
<dbReference type="SMR" id="Q2LUD6"/>
<dbReference type="FunCoup" id="Q2LUD6">
    <property type="interactions" value="97"/>
</dbReference>
<dbReference type="STRING" id="56780.SYN_01935"/>
<dbReference type="KEGG" id="sat:SYN_01935"/>
<dbReference type="eggNOG" id="COG0703">
    <property type="taxonomic scope" value="Bacteria"/>
</dbReference>
<dbReference type="HOGENOM" id="CLU_057607_4_0_7"/>
<dbReference type="InParanoid" id="Q2LUD6"/>
<dbReference type="OrthoDB" id="9800332at2"/>
<dbReference type="UniPathway" id="UPA00053">
    <property type="reaction ID" value="UER00088"/>
</dbReference>
<dbReference type="Proteomes" id="UP000001933">
    <property type="component" value="Chromosome"/>
</dbReference>
<dbReference type="GO" id="GO:0005829">
    <property type="term" value="C:cytosol"/>
    <property type="evidence" value="ECO:0007669"/>
    <property type="project" value="TreeGrafter"/>
</dbReference>
<dbReference type="GO" id="GO:0005524">
    <property type="term" value="F:ATP binding"/>
    <property type="evidence" value="ECO:0007669"/>
    <property type="project" value="UniProtKB-UniRule"/>
</dbReference>
<dbReference type="GO" id="GO:0000287">
    <property type="term" value="F:magnesium ion binding"/>
    <property type="evidence" value="ECO:0007669"/>
    <property type="project" value="UniProtKB-UniRule"/>
</dbReference>
<dbReference type="GO" id="GO:0004765">
    <property type="term" value="F:shikimate kinase activity"/>
    <property type="evidence" value="ECO:0007669"/>
    <property type="project" value="UniProtKB-UniRule"/>
</dbReference>
<dbReference type="GO" id="GO:0008652">
    <property type="term" value="P:amino acid biosynthetic process"/>
    <property type="evidence" value="ECO:0007669"/>
    <property type="project" value="UniProtKB-KW"/>
</dbReference>
<dbReference type="GO" id="GO:0009073">
    <property type="term" value="P:aromatic amino acid family biosynthetic process"/>
    <property type="evidence" value="ECO:0007669"/>
    <property type="project" value="UniProtKB-KW"/>
</dbReference>
<dbReference type="GO" id="GO:0009423">
    <property type="term" value="P:chorismate biosynthetic process"/>
    <property type="evidence" value="ECO:0007669"/>
    <property type="project" value="UniProtKB-UniRule"/>
</dbReference>
<dbReference type="CDD" id="cd00464">
    <property type="entry name" value="SK"/>
    <property type="match status" value="1"/>
</dbReference>
<dbReference type="Gene3D" id="3.40.50.300">
    <property type="entry name" value="P-loop containing nucleotide triphosphate hydrolases"/>
    <property type="match status" value="1"/>
</dbReference>
<dbReference type="HAMAP" id="MF_00109">
    <property type="entry name" value="Shikimate_kinase"/>
    <property type="match status" value="1"/>
</dbReference>
<dbReference type="InterPro" id="IPR027417">
    <property type="entry name" value="P-loop_NTPase"/>
</dbReference>
<dbReference type="InterPro" id="IPR031322">
    <property type="entry name" value="Shikimate/glucono_kinase"/>
</dbReference>
<dbReference type="InterPro" id="IPR000623">
    <property type="entry name" value="Shikimate_kinase/TSH1"/>
</dbReference>
<dbReference type="InterPro" id="IPR023000">
    <property type="entry name" value="Shikimate_kinase_CS"/>
</dbReference>
<dbReference type="PANTHER" id="PTHR21087">
    <property type="entry name" value="SHIKIMATE KINASE"/>
    <property type="match status" value="1"/>
</dbReference>
<dbReference type="PANTHER" id="PTHR21087:SF16">
    <property type="entry name" value="SHIKIMATE KINASE 1, CHLOROPLASTIC"/>
    <property type="match status" value="1"/>
</dbReference>
<dbReference type="Pfam" id="PF01202">
    <property type="entry name" value="SKI"/>
    <property type="match status" value="1"/>
</dbReference>
<dbReference type="PRINTS" id="PR01100">
    <property type="entry name" value="SHIKIMTKNASE"/>
</dbReference>
<dbReference type="SUPFAM" id="SSF52540">
    <property type="entry name" value="P-loop containing nucleoside triphosphate hydrolases"/>
    <property type="match status" value="1"/>
</dbReference>
<dbReference type="PROSITE" id="PS01128">
    <property type="entry name" value="SHIKIMATE_KINASE"/>
    <property type="match status" value="1"/>
</dbReference>
<gene>
    <name evidence="1" type="primary">aroK</name>
    <name type="ordered locus">SYNAS_18130</name>
    <name type="ORF">SYN_01935</name>
</gene>